<evidence type="ECO:0000255" key="1">
    <source>
        <dbReference type="HAMAP-Rule" id="MF_01342"/>
    </source>
</evidence>
<evidence type="ECO:0000305" key="2"/>
<proteinExistence type="inferred from homology"/>
<gene>
    <name evidence="1" type="primary">rplP</name>
    <name type="ordered locus">Asuc_0466</name>
</gene>
<comment type="function">
    <text evidence="1">Binds 23S rRNA and is also seen to make contacts with the A and possibly P site tRNAs.</text>
</comment>
<comment type="subunit">
    <text evidence="1">Part of the 50S ribosomal subunit.</text>
</comment>
<comment type="similarity">
    <text evidence="1">Belongs to the universal ribosomal protein uL16 family.</text>
</comment>
<organism>
    <name type="scientific">Actinobacillus succinogenes (strain ATCC 55618 / DSM 22257 / CCUG 43843 / 130Z)</name>
    <dbReference type="NCBI Taxonomy" id="339671"/>
    <lineage>
        <taxon>Bacteria</taxon>
        <taxon>Pseudomonadati</taxon>
        <taxon>Pseudomonadota</taxon>
        <taxon>Gammaproteobacteria</taxon>
        <taxon>Pasteurellales</taxon>
        <taxon>Pasteurellaceae</taxon>
        <taxon>Actinobacillus</taxon>
    </lineage>
</organism>
<dbReference type="EMBL" id="CP000746">
    <property type="protein sequence ID" value="ABR73842.1"/>
    <property type="molecule type" value="Genomic_DNA"/>
</dbReference>
<dbReference type="RefSeq" id="WP_012072225.1">
    <property type="nucleotide sequence ID" value="NC_009655.1"/>
</dbReference>
<dbReference type="SMR" id="A6VLJ5"/>
<dbReference type="STRING" id="339671.Asuc_0466"/>
<dbReference type="KEGG" id="asu:Asuc_0466"/>
<dbReference type="eggNOG" id="COG0197">
    <property type="taxonomic scope" value="Bacteria"/>
</dbReference>
<dbReference type="HOGENOM" id="CLU_078858_2_1_6"/>
<dbReference type="OrthoDB" id="9802589at2"/>
<dbReference type="Proteomes" id="UP000001114">
    <property type="component" value="Chromosome"/>
</dbReference>
<dbReference type="GO" id="GO:0022625">
    <property type="term" value="C:cytosolic large ribosomal subunit"/>
    <property type="evidence" value="ECO:0007669"/>
    <property type="project" value="TreeGrafter"/>
</dbReference>
<dbReference type="GO" id="GO:0019843">
    <property type="term" value="F:rRNA binding"/>
    <property type="evidence" value="ECO:0007669"/>
    <property type="project" value="UniProtKB-UniRule"/>
</dbReference>
<dbReference type="GO" id="GO:0003735">
    <property type="term" value="F:structural constituent of ribosome"/>
    <property type="evidence" value="ECO:0007669"/>
    <property type="project" value="InterPro"/>
</dbReference>
<dbReference type="GO" id="GO:0000049">
    <property type="term" value="F:tRNA binding"/>
    <property type="evidence" value="ECO:0007669"/>
    <property type="project" value="UniProtKB-KW"/>
</dbReference>
<dbReference type="GO" id="GO:0006412">
    <property type="term" value="P:translation"/>
    <property type="evidence" value="ECO:0007669"/>
    <property type="project" value="UniProtKB-UniRule"/>
</dbReference>
<dbReference type="CDD" id="cd01433">
    <property type="entry name" value="Ribosomal_L16_L10e"/>
    <property type="match status" value="1"/>
</dbReference>
<dbReference type="FunFam" id="3.90.1170.10:FF:000001">
    <property type="entry name" value="50S ribosomal protein L16"/>
    <property type="match status" value="1"/>
</dbReference>
<dbReference type="Gene3D" id="3.90.1170.10">
    <property type="entry name" value="Ribosomal protein L10e/L16"/>
    <property type="match status" value="1"/>
</dbReference>
<dbReference type="HAMAP" id="MF_01342">
    <property type="entry name" value="Ribosomal_uL16"/>
    <property type="match status" value="1"/>
</dbReference>
<dbReference type="InterPro" id="IPR047873">
    <property type="entry name" value="Ribosomal_uL16"/>
</dbReference>
<dbReference type="InterPro" id="IPR000114">
    <property type="entry name" value="Ribosomal_uL16_bact-type"/>
</dbReference>
<dbReference type="InterPro" id="IPR020798">
    <property type="entry name" value="Ribosomal_uL16_CS"/>
</dbReference>
<dbReference type="InterPro" id="IPR016180">
    <property type="entry name" value="Ribosomal_uL16_dom"/>
</dbReference>
<dbReference type="InterPro" id="IPR036920">
    <property type="entry name" value="Ribosomal_uL16_sf"/>
</dbReference>
<dbReference type="NCBIfam" id="TIGR01164">
    <property type="entry name" value="rplP_bact"/>
    <property type="match status" value="1"/>
</dbReference>
<dbReference type="PANTHER" id="PTHR12220">
    <property type="entry name" value="50S/60S RIBOSOMAL PROTEIN L16"/>
    <property type="match status" value="1"/>
</dbReference>
<dbReference type="PANTHER" id="PTHR12220:SF13">
    <property type="entry name" value="LARGE RIBOSOMAL SUBUNIT PROTEIN UL16M"/>
    <property type="match status" value="1"/>
</dbReference>
<dbReference type="Pfam" id="PF00252">
    <property type="entry name" value="Ribosomal_L16"/>
    <property type="match status" value="1"/>
</dbReference>
<dbReference type="PRINTS" id="PR00060">
    <property type="entry name" value="RIBOSOMALL16"/>
</dbReference>
<dbReference type="SUPFAM" id="SSF54686">
    <property type="entry name" value="Ribosomal protein L16p/L10e"/>
    <property type="match status" value="1"/>
</dbReference>
<dbReference type="PROSITE" id="PS00586">
    <property type="entry name" value="RIBOSOMAL_L16_1"/>
    <property type="match status" value="1"/>
</dbReference>
<dbReference type="PROSITE" id="PS00701">
    <property type="entry name" value="RIBOSOMAL_L16_2"/>
    <property type="match status" value="1"/>
</dbReference>
<name>RL16_ACTSZ</name>
<feature type="chain" id="PRO_1000073322" description="Large ribosomal subunit protein uL16">
    <location>
        <begin position="1"/>
        <end position="136"/>
    </location>
</feature>
<accession>A6VLJ5</accession>
<reference key="1">
    <citation type="journal article" date="2010" name="BMC Genomics">
        <title>A genomic perspective on the potential of Actinobacillus succinogenes for industrial succinate production.</title>
        <authorList>
            <person name="McKinlay J.B."/>
            <person name="Laivenieks M."/>
            <person name="Schindler B.D."/>
            <person name="McKinlay A.A."/>
            <person name="Siddaramappa S."/>
            <person name="Challacombe J.F."/>
            <person name="Lowry S.R."/>
            <person name="Clum A."/>
            <person name="Lapidus A.L."/>
            <person name="Burkhart K.B."/>
            <person name="Harkins V."/>
            <person name="Vieille C."/>
        </authorList>
    </citation>
    <scope>NUCLEOTIDE SEQUENCE [LARGE SCALE GENOMIC DNA]</scope>
    <source>
        <strain>ATCC 55618 / DSM 22257 / CCUG 43843 / 130Z</strain>
    </source>
</reference>
<sequence length="136" mass="15196">MLQPKRTKFRKVHKGRNRGLAAGTEVSFGTFGLKAVGRGRLTARQIEAARRAMTRAVKRQGKIWIRVFPDKPITEKPLEVRMGKGKGNVEYWVALIQPGKVLYEMDGVSEEIARNAFALAAAKLPIKTTFVTKTVM</sequence>
<keyword id="KW-1185">Reference proteome</keyword>
<keyword id="KW-0687">Ribonucleoprotein</keyword>
<keyword id="KW-0689">Ribosomal protein</keyword>
<keyword id="KW-0694">RNA-binding</keyword>
<keyword id="KW-0699">rRNA-binding</keyword>
<keyword id="KW-0820">tRNA-binding</keyword>
<protein>
    <recommendedName>
        <fullName evidence="1">Large ribosomal subunit protein uL16</fullName>
    </recommendedName>
    <alternativeName>
        <fullName evidence="2">50S ribosomal protein L16</fullName>
    </alternativeName>
</protein>